<dbReference type="EC" id="4.2.1.48" evidence="1"/>
<dbReference type="EMBL" id="AY358516">
    <property type="protein sequence ID" value="AAQ88880.1"/>
    <property type="molecule type" value="mRNA"/>
</dbReference>
<dbReference type="EMBL" id="AK022564">
    <property type="protein sequence ID" value="BAB14102.1"/>
    <property type="molecule type" value="mRNA"/>
</dbReference>
<dbReference type="EMBL" id="AK023200">
    <property type="protein sequence ID" value="BAB14458.1"/>
    <property type="molecule type" value="mRNA"/>
</dbReference>
<dbReference type="EMBL" id="AK024603">
    <property type="protein sequence ID" value="BAB14932.1"/>
    <property type="status" value="ALT_SEQ"/>
    <property type="molecule type" value="mRNA"/>
</dbReference>
<dbReference type="EMBL" id="AK097294">
    <property type="protein sequence ID" value="BAG53449.1"/>
    <property type="molecule type" value="mRNA"/>
</dbReference>
<dbReference type="EMBL" id="BX161393">
    <property type="protein sequence ID" value="CAD61880.1"/>
    <property type="molecule type" value="mRNA"/>
</dbReference>
<dbReference type="EMBL" id="BX247989">
    <property type="protein sequence ID" value="CAD62323.1"/>
    <property type="molecule type" value="mRNA"/>
</dbReference>
<dbReference type="EMBL" id="BX248060">
    <property type="protein sequence ID" value="CAD62356.1"/>
    <property type="molecule type" value="mRNA"/>
</dbReference>
<dbReference type="EMBL" id="BX248294">
    <property type="protein sequence ID" value="CAD62622.1"/>
    <property type="molecule type" value="mRNA"/>
</dbReference>
<dbReference type="EMBL" id="BX248782">
    <property type="protein sequence ID" value="CAD66589.1"/>
    <property type="molecule type" value="mRNA"/>
</dbReference>
<dbReference type="EMBL" id="BX537970">
    <property type="protein sequence ID" value="CAD97934.1"/>
    <property type="molecule type" value="mRNA"/>
</dbReference>
<dbReference type="EMBL" id="BC009182">
    <property type="protein sequence ID" value="AAH09182.1"/>
    <property type="molecule type" value="mRNA"/>
</dbReference>
<dbReference type="EMBL" id="BC010614">
    <property type="protein sequence ID" value="AAH10614.1"/>
    <property type="molecule type" value="mRNA"/>
</dbReference>
<dbReference type="EMBL" id="BC065558">
    <property type="protein sequence ID" value="AAH65558.1"/>
    <property type="molecule type" value="mRNA"/>
</dbReference>
<dbReference type="CCDS" id="CCDS32141.1">
    <molecule id="Q7Z3D6-1"/>
</dbReference>
<dbReference type="CCDS" id="CCDS41979.1">
    <molecule id="Q7Z3D6-2"/>
</dbReference>
<dbReference type="CCDS" id="CCDS45150.1">
    <molecule id="Q7Z3D6-5"/>
</dbReference>
<dbReference type="CCDS" id="CCDS66693.1">
    <molecule id="Q7Z3D6-3"/>
</dbReference>
<dbReference type="CCDS" id="CCDS73677.1">
    <molecule id="Q7Z3D6-6"/>
</dbReference>
<dbReference type="RefSeq" id="NP_001095836.1">
    <molecule id="Q7Z3D6-1"/>
    <property type="nucleotide sequence ID" value="NM_001102366.3"/>
</dbReference>
<dbReference type="RefSeq" id="NP_001095837.1">
    <molecule id="Q7Z3D6-1"/>
    <property type="nucleotide sequence ID" value="NM_001102367.2"/>
</dbReference>
<dbReference type="RefSeq" id="NP_001095838.1">
    <molecule id="Q7Z3D6-2"/>
    <property type="nucleotide sequence ID" value="NM_001102368.3"/>
</dbReference>
<dbReference type="RefSeq" id="NP_001095839.1">
    <molecule id="Q7Z3D6-5"/>
    <property type="nucleotide sequence ID" value="NM_001102369.3"/>
</dbReference>
<dbReference type="RefSeq" id="NP_001273399.1">
    <molecule id="Q7Z3D6-2"/>
    <property type="nucleotide sequence ID" value="NM_001286470.2"/>
</dbReference>
<dbReference type="RefSeq" id="NP_001273400.1">
    <molecule id="Q7Z3D6-1"/>
    <property type="nucleotide sequence ID" value="NM_001286471.1"/>
</dbReference>
<dbReference type="RefSeq" id="NP_001273401.1">
    <molecule id="Q7Z3D6-3"/>
    <property type="nucleotide sequence ID" value="NM_001286472.2"/>
</dbReference>
<dbReference type="RefSeq" id="NP_001273402.1">
    <molecule id="Q7Z3D6-6"/>
    <property type="nucleotide sequence ID" value="NM_001286473.2"/>
</dbReference>
<dbReference type="RefSeq" id="NP_001345239.1">
    <molecule id="Q7Z3D6-2"/>
    <property type="nucleotide sequence ID" value="NM_001358310.2"/>
</dbReference>
<dbReference type="RefSeq" id="NP_001345240.1">
    <molecule id="Q7Z3D6-1"/>
    <property type="nucleotide sequence ID" value="NM_001358311.2"/>
</dbReference>
<dbReference type="RefSeq" id="NP_001345241.1">
    <molecule id="Q7Z3D6-2"/>
    <property type="nucleotide sequence ID" value="NM_001358312.2"/>
</dbReference>
<dbReference type="RefSeq" id="NP_079228.4">
    <molecule id="Q7Z3D6-1"/>
    <property type="nucleotide sequence ID" value="NM_024952.7"/>
</dbReference>
<dbReference type="SMR" id="Q7Z3D6"/>
<dbReference type="BioGRID" id="123071">
    <property type="interactions" value="30"/>
</dbReference>
<dbReference type="FunCoup" id="Q7Z3D6">
    <property type="interactions" value="140"/>
</dbReference>
<dbReference type="IntAct" id="Q7Z3D6">
    <property type="interactions" value="18"/>
</dbReference>
<dbReference type="STRING" id="9606.ENSP00000428263"/>
<dbReference type="GlyCosmos" id="Q7Z3D6">
    <property type="glycosylation" value="1 site, 1 glycan"/>
</dbReference>
<dbReference type="iPTMnet" id="Q7Z3D6"/>
<dbReference type="PhosphoSitePlus" id="Q7Z3D6"/>
<dbReference type="SwissPalm" id="Q7Z3D6"/>
<dbReference type="BioMuta" id="DGLUCY"/>
<dbReference type="DMDM" id="48428039"/>
<dbReference type="jPOST" id="Q7Z3D6"/>
<dbReference type="MassIVE" id="Q7Z3D6"/>
<dbReference type="PaxDb" id="9606-ENSP00000428263"/>
<dbReference type="PeptideAtlas" id="Q7Z3D6"/>
<dbReference type="ProteomicsDB" id="69032">
    <molecule id="Q7Z3D6-1"/>
</dbReference>
<dbReference type="ProteomicsDB" id="69033">
    <molecule id="Q7Z3D6-2"/>
</dbReference>
<dbReference type="ProteomicsDB" id="69034">
    <molecule id="Q7Z3D6-3"/>
</dbReference>
<dbReference type="ProteomicsDB" id="69035">
    <molecule id="Q7Z3D6-4"/>
</dbReference>
<dbReference type="ProteomicsDB" id="69036">
    <molecule id="Q7Z3D6-5"/>
</dbReference>
<dbReference type="ProteomicsDB" id="69037">
    <molecule id="Q7Z3D6-6"/>
</dbReference>
<dbReference type="Pumba" id="Q7Z3D6"/>
<dbReference type="Antibodypedia" id="52277">
    <property type="antibodies" value="33 antibodies from 14 providers"/>
</dbReference>
<dbReference type="DNASU" id="80017"/>
<dbReference type="Ensembl" id="ENST00000256324.15">
    <molecule id="Q7Z3D6-2"/>
    <property type="protein sequence ID" value="ENSP00000256324.9"/>
    <property type="gene ID" value="ENSG00000133943.21"/>
</dbReference>
<dbReference type="Ensembl" id="ENST00000298858.8">
    <molecule id="Q7Z3D6-6"/>
    <property type="protein sequence ID" value="ENSP00000298858.4"/>
    <property type="gene ID" value="ENSG00000133943.21"/>
</dbReference>
<dbReference type="Ensembl" id="ENST00000412671.6">
    <molecule id="Q7Z3D6-2"/>
    <property type="protein sequence ID" value="ENSP00000404196.2"/>
    <property type="gene ID" value="ENSG00000133943.21"/>
</dbReference>
<dbReference type="Ensembl" id="ENST00000428926.6">
    <molecule id="Q7Z3D6-1"/>
    <property type="protein sequence ID" value="ENSP00000404343.2"/>
    <property type="gene ID" value="ENSG00000133943.21"/>
</dbReference>
<dbReference type="Ensembl" id="ENST00000518665.6">
    <molecule id="Q7Z3D6-6"/>
    <property type="protein sequence ID" value="ENSP00000429098.1"/>
    <property type="gene ID" value="ENSG00000133943.21"/>
</dbReference>
<dbReference type="Ensembl" id="ENST00000518868.5">
    <molecule id="Q7Z3D6-2"/>
    <property type="protein sequence ID" value="ENSP00000428263.1"/>
    <property type="gene ID" value="ENSG00000133943.21"/>
</dbReference>
<dbReference type="Ensembl" id="ENST00000520328.5">
    <molecule id="Q7Z3D6-5"/>
    <property type="protein sequence ID" value="ENSP00000429453.1"/>
    <property type="gene ID" value="ENSG00000133943.21"/>
</dbReference>
<dbReference type="Ensembl" id="ENST00000521077.6">
    <molecule id="Q7Z3D6-3"/>
    <property type="protein sequence ID" value="ENSP00000430137.1"/>
    <property type="gene ID" value="ENSG00000133943.21"/>
</dbReference>
<dbReference type="Ensembl" id="ENST00000522322.5">
    <molecule id="Q7Z3D6-1"/>
    <property type="protein sequence ID" value="ENSP00000427953.1"/>
    <property type="gene ID" value="ENSG00000133943.21"/>
</dbReference>
<dbReference type="Ensembl" id="ENST00000523771.5">
    <molecule id="Q7Z3D6-1"/>
    <property type="protein sequence ID" value="ENSP00000429655.1"/>
    <property type="gene ID" value="ENSG00000133943.21"/>
</dbReference>
<dbReference type="Ensembl" id="ENST00000523816.5">
    <molecule id="Q7Z3D6-1"/>
    <property type="protein sequence ID" value="ENSP00000428974.1"/>
    <property type="gene ID" value="ENSG00000133943.21"/>
</dbReference>
<dbReference type="Ensembl" id="ENST00000525393.6">
    <molecule id="Q7Z3D6-3"/>
    <property type="protein sequence ID" value="ENSP00000435459.3"/>
    <property type="gene ID" value="ENSG00000133943.21"/>
</dbReference>
<dbReference type="GeneID" id="80017"/>
<dbReference type="KEGG" id="hsa:80017"/>
<dbReference type="MANE-Select" id="ENST00000256324.15">
    <molecule id="Q7Z3D6-2"/>
    <property type="protein sequence ID" value="ENSP00000256324.9"/>
    <property type="RefSeq nucleotide sequence ID" value="NM_001102368.3"/>
    <property type="RefSeq protein sequence ID" value="NP_001095838.1"/>
</dbReference>
<dbReference type="UCSC" id="uc001xyv.4">
    <molecule id="Q7Z3D6-1"/>
    <property type="organism name" value="human"/>
</dbReference>
<dbReference type="AGR" id="HGNC:20498"/>
<dbReference type="CTD" id="80017"/>
<dbReference type="DisGeNET" id="80017"/>
<dbReference type="GeneCards" id="DGLUCY"/>
<dbReference type="HGNC" id="HGNC:20498">
    <property type="gene designation" value="DGLUCY"/>
</dbReference>
<dbReference type="HPA" id="ENSG00000133943">
    <property type="expression patterns" value="Tissue enhanced (tongue)"/>
</dbReference>
<dbReference type="MIM" id="620716">
    <property type="type" value="gene"/>
</dbReference>
<dbReference type="neXtProt" id="NX_Q7Z3D6"/>
<dbReference type="OpenTargets" id="ENSG00000133943"/>
<dbReference type="PharmGKB" id="PA134952868"/>
<dbReference type="VEuPathDB" id="HostDB:ENSG00000133943"/>
<dbReference type="eggNOG" id="ENOG502QV7A">
    <property type="taxonomic scope" value="Eukaryota"/>
</dbReference>
<dbReference type="GeneTree" id="ENSGT00390000002237"/>
<dbReference type="HOGENOM" id="CLU_140425_0_0_1"/>
<dbReference type="InParanoid" id="Q7Z3D6"/>
<dbReference type="OMA" id="HIGHPGL"/>
<dbReference type="OrthoDB" id="10262538at2759"/>
<dbReference type="PAN-GO" id="Q7Z3D6">
    <property type="GO annotations" value="2 GO annotations based on evolutionary models"/>
</dbReference>
<dbReference type="PhylomeDB" id="Q7Z3D6"/>
<dbReference type="TreeFam" id="TF300254"/>
<dbReference type="PathwayCommons" id="Q7Z3D6"/>
<dbReference type="SignaLink" id="Q7Z3D6"/>
<dbReference type="BioGRID-ORCS" id="80017">
    <property type="hits" value="12 hits in 1131 CRISPR screens"/>
</dbReference>
<dbReference type="CD-CODE" id="FB4E32DD">
    <property type="entry name" value="Presynaptic clusters and postsynaptic densities"/>
</dbReference>
<dbReference type="ChiTaRS" id="C14orf159">
    <property type="organism name" value="human"/>
</dbReference>
<dbReference type="GeneWiki" id="C14orf159"/>
<dbReference type="GenomeRNAi" id="80017"/>
<dbReference type="Pharos" id="Q7Z3D6">
    <property type="development level" value="Tdark"/>
</dbReference>
<dbReference type="PRO" id="PR:Q7Z3D6"/>
<dbReference type="Proteomes" id="UP000005640">
    <property type="component" value="Chromosome 14"/>
</dbReference>
<dbReference type="RNAct" id="Q7Z3D6">
    <property type="molecule type" value="protein"/>
</dbReference>
<dbReference type="Bgee" id="ENSG00000133943">
    <property type="expression patterns" value="Expressed in apex of heart and 205 other cell types or tissues"/>
</dbReference>
<dbReference type="ExpressionAtlas" id="Q7Z3D6">
    <property type="expression patterns" value="baseline and differential"/>
</dbReference>
<dbReference type="GO" id="GO:0005759">
    <property type="term" value="C:mitochondrial matrix"/>
    <property type="evidence" value="ECO:0000250"/>
    <property type="project" value="UniProtKB"/>
</dbReference>
<dbReference type="GO" id="GO:0005739">
    <property type="term" value="C:mitochondrion"/>
    <property type="evidence" value="ECO:0006056"/>
    <property type="project" value="FlyBase"/>
</dbReference>
<dbReference type="GO" id="GO:0047820">
    <property type="term" value="F:D-glutamate cyclase activity"/>
    <property type="evidence" value="ECO:0000250"/>
    <property type="project" value="UniProtKB"/>
</dbReference>
<dbReference type="GO" id="GO:0006536">
    <property type="term" value="P:glutamate metabolic process"/>
    <property type="evidence" value="ECO:0000250"/>
    <property type="project" value="UniProtKB"/>
</dbReference>
<dbReference type="FunFam" id="3.30.2040.10:FF:000001">
    <property type="entry name" value="D-glutamate cyclase, mitochondrial"/>
    <property type="match status" value="1"/>
</dbReference>
<dbReference type="FunFam" id="3.40.1640.10:FF:000001">
    <property type="entry name" value="D-glutamate cyclase, mitochondrial"/>
    <property type="match status" value="1"/>
</dbReference>
<dbReference type="FunFam" id="3.90.1640.20:FF:000001">
    <property type="entry name" value="D-glutamate cyclase, mitochondrial"/>
    <property type="match status" value="1"/>
</dbReference>
<dbReference type="Gene3D" id="3.40.1640.10">
    <property type="entry name" value="PSTPO5379-like"/>
    <property type="match status" value="1"/>
</dbReference>
<dbReference type="Gene3D" id="3.30.2040.10">
    <property type="entry name" value="PSTPO5379-like domain"/>
    <property type="match status" value="1"/>
</dbReference>
<dbReference type="Gene3D" id="3.90.1640.20">
    <property type="entry name" value="TON_0340"/>
    <property type="match status" value="1"/>
</dbReference>
<dbReference type="InterPro" id="IPR009906">
    <property type="entry name" value="D-Glu_cyclase"/>
</dbReference>
<dbReference type="InterPro" id="IPR017135">
    <property type="entry name" value="D-Glu_cyclase_mito"/>
</dbReference>
<dbReference type="InterPro" id="IPR025504">
    <property type="entry name" value="GLUCM_C"/>
</dbReference>
<dbReference type="InterPro" id="IPR038021">
    <property type="entry name" value="Putative_hydro-lyase"/>
</dbReference>
<dbReference type="PANTHER" id="PTHR32022">
    <property type="entry name" value="D-GLUTAMATE CYCLASE, MITOCHONDRIAL"/>
    <property type="match status" value="1"/>
</dbReference>
<dbReference type="PANTHER" id="PTHR32022:SF10">
    <property type="entry name" value="D-GLUTAMATE CYCLASE, MITOCHONDRIAL"/>
    <property type="match status" value="1"/>
</dbReference>
<dbReference type="Pfam" id="PF07286">
    <property type="entry name" value="D-Glu_cyclase"/>
    <property type="match status" value="1"/>
</dbReference>
<dbReference type="Pfam" id="PF14336">
    <property type="entry name" value="GLUCM-like_C"/>
    <property type="match status" value="1"/>
</dbReference>
<dbReference type="PIRSF" id="PIRSF037204">
    <property type="entry name" value="UCP037204"/>
    <property type="match status" value="1"/>
</dbReference>
<dbReference type="SUPFAM" id="SSF160920">
    <property type="entry name" value="PSTPO5379-like"/>
    <property type="match status" value="1"/>
</dbReference>
<organism>
    <name type="scientific">Homo sapiens</name>
    <name type="common">Human</name>
    <dbReference type="NCBI Taxonomy" id="9606"/>
    <lineage>
        <taxon>Eukaryota</taxon>
        <taxon>Metazoa</taxon>
        <taxon>Chordata</taxon>
        <taxon>Craniata</taxon>
        <taxon>Vertebrata</taxon>
        <taxon>Euteleostomi</taxon>
        <taxon>Mammalia</taxon>
        <taxon>Eutheria</taxon>
        <taxon>Euarchontoglires</taxon>
        <taxon>Primates</taxon>
        <taxon>Haplorrhini</taxon>
        <taxon>Catarrhini</taxon>
        <taxon>Hominidae</taxon>
        <taxon>Homo</taxon>
    </lineage>
</organism>
<name>GLUCM_HUMAN</name>
<comment type="function">
    <text evidence="1">D-glutamate cyclase that converts D-glutamate to 5-oxo-D-proline.</text>
</comment>
<comment type="catalytic activity">
    <reaction evidence="1">
        <text>D-glutamate = 5-oxo-D-proline + H2O</text>
        <dbReference type="Rhea" id="RHEA:22360"/>
        <dbReference type="ChEBI" id="CHEBI:15377"/>
        <dbReference type="ChEBI" id="CHEBI:29986"/>
        <dbReference type="ChEBI" id="CHEBI:57948"/>
        <dbReference type="EC" id="4.2.1.48"/>
    </reaction>
</comment>
<comment type="interaction">
    <interactant intactId="EBI-2807872">
        <id>Q7Z3D6</id>
    </interactant>
    <interactant intactId="EBI-9092052">
        <id>Q9Y3D2</id>
        <label>MSRB2</label>
    </interactant>
    <organismsDiffer>false</organismsDiffer>
    <experiments>3</experiments>
</comment>
<comment type="interaction">
    <interactant intactId="EBI-2807872">
        <id>Q7Z3D6</id>
    </interactant>
    <interactant intactId="EBI-348380">
        <id>P25788</id>
        <label>PSMA3</label>
    </interactant>
    <organismsDiffer>false</organismsDiffer>
    <experiments>3</experiments>
</comment>
<comment type="subcellular location">
    <subcellularLocation>
        <location evidence="1">Mitochondrion matrix</location>
    </subcellularLocation>
</comment>
<comment type="alternative products">
    <event type="alternative splicing"/>
    <isoform>
        <id>Q7Z3D6-1</id>
        <name>1</name>
        <sequence type="displayed"/>
    </isoform>
    <isoform>
        <id>Q7Z3D6-2</id>
        <name>2</name>
        <sequence type="described" ref="VSP_010506"/>
    </isoform>
    <isoform>
        <id>Q7Z3D6-3</id>
        <name>3</name>
        <sequence type="described" ref="VSP_010506 VSP_010509"/>
    </isoform>
    <isoform>
        <id>Q7Z3D6-4</id>
        <name>4</name>
        <sequence type="described" ref="VSP_010506 VSP_010510 VSP_010511"/>
    </isoform>
    <isoform>
        <id>Q7Z3D6-5</id>
        <name>5</name>
        <sequence type="described" ref="VSP_010508 VSP_010509"/>
    </isoform>
    <isoform>
        <id>Q7Z3D6-6</id>
        <name>6</name>
        <sequence type="described" ref="VSP_010505 VSP_010507"/>
    </isoform>
</comment>
<comment type="miscellaneous">
    <molecule>Isoform 4</molecule>
    <text evidence="8">May be produced at very low levels due to a premature stop codon in the mRNA, leading to nonsense-mediated mRNA decay.</text>
</comment>
<comment type="similarity">
    <text evidence="8">Belongs to the D-glutamate cyclase family.</text>
</comment>
<comment type="sequence caution" evidence="8">
    <conflict type="frameshift">
        <sequence resource="EMBL-CDS" id="BAB14932"/>
    </conflict>
</comment>
<gene>
    <name evidence="9" type="primary">DGLUCY</name>
    <name evidence="9" type="synonym">C14orf159</name>
    <name evidence="3" type="ORF">UNQ2439/PRO5000</name>
</gene>
<sequence length="616" mass="66437">MPFTLHLRSRLPSAIRSLILQKKPNIRNTSSMAGELRPASLVVLPRSLAPAFERFCQVNTGPLPLLGQSEPEKWMLPPQGAISETRMGHPQFWKYEFGACTGSLASLEQYSEQLKDMVAFFLGCSFSLEEALEKAGLPRRDPAGHSQTTVPCVTHAGFCCPLVVTMRPIPKDKLEGLVRACCSLGGEQGQPVHMGDPELLGIKELSKPAYGDAMVCPPGEVPVFWPSPLTSLGAVSSCETPLAFASIPGCTVMTDLKDAKAPPGCLTPERIPEVHHISQDPLHYSIASVSASQKIRELESMIGIDPGNRGIGHLLCKDELLKASLSLSHARSVLITTGFPTHFNHEPPEETDGPPGAVALVAFLQALEKEVAIIVDQRAWNLHQKIVEDAVEQGVLKTQIPILTYQGGSVEAAQAFLCKNGDPQTPRFDHLVAIERAGRAADGNYYNARKMNIKHLVDPIDDLFLAAKKIPGISSTGVGDGGNELGMGKVKEAVRRHIRHGDVIACDVEADFAVIAGVSNWGGYALACALYILYSCAVHSQYLRKAVGPSRAPGDQAWTQALPSVIKEEKMLGILVQHKVRSGVSGIVGMEVDGLPFHNTHAEMIQKLVDVTTAQV</sequence>
<keyword id="KW-0025">Alternative splicing</keyword>
<keyword id="KW-0456">Lyase</keyword>
<keyword id="KW-0496">Mitochondrion</keyword>
<keyword id="KW-1267">Proteomics identification</keyword>
<keyword id="KW-1185">Reference proteome</keyword>
<keyword id="KW-0809">Transit peptide</keyword>
<proteinExistence type="evidence at protein level"/>
<accession>Q7Z3D6</accession>
<accession>B3KUI7</accession>
<accession>Q86SW3</accession>
<accession>Q86SX8</accession>
<accession>Q86SX9</accession>
<accession>Q86T08</accession>
<accession>Q86TV5</accession>
<accession>Q96GW5</accession>
<accession>Q9H7G0</accession>
<accession>Q9H8Y9</accession>
<accession>Q9H9W6</accession>
<protein>
    <recommendedName>
        <fullName evidence="8">D-glutamate cyclase, mitochondrial</fullName>
        <ecNumber evidence="1">4.2.1.48</ecNumber>
    </recommendedName>
</protein>
<feature type="transit peptide" description="Mitochondrion" evidence="2">
    <location>
        <begin position="1"/>
        <end position="28"/>
    </location>
</feature>
<feature type="chain" id="PRO_0000036292" description="D-glutamate cyclase, mitochondrial">
    <location>
        <begin position="29"/>
        <end position="616"/>
    </location>
</feature>
<feature type="splice variant" id="VSP_010505" description="In isoform 6." evidence="5">
    <original>RMGHPQFWKYEFGACTGSLASLEQYSEQLKDMVAFFLGCSFSLEEALEKAGLPRRDPAGHSQTTVPCVTHAGFC</original>
    <variation>SLRDLHSAWHRTSLMTVAQERAALPTVLTPSPITWRLSWLRSLRSWRKSSPGEIPLALPSVHSIAQARNPPVQD</variation>
    <location>
        <begin position="86"/>
        <end position="159"/>
    </location>
</feature>
<feature type="splice variant" id="VSP_010506" description="In isoform 2, isoform 3 and isoform 4." evidence="4 6 7">
    <original>Q</original>
    <variation>QAGAYK</variation>
    <location>
        <position position="147"/>
    </location>
</feature>
<feature type="splice variant" id="VSP_010507" description="In isoform 6." evidence="5">
    <location>
        <begin position="160"/>
        <end position="616"/>
    </location>
</feature>
<feature type="splice variant" id="VSP_010508" description="In isoform 5." evidence="4">
    <location>
        <begin position="186"/>
        <end position="197"/>
    </location>
</feature>
<feature type="splice variant" id="VSP_010509" description="In isoform 3 and isoform 5." evidence="4 7">
    <location>
        <begin position="477"/>
        <end position="516"/>
    </location>
</feature>
<feature type="splice variant" id="VSP_010510" description="In isoform 4." evidence="7">
    <original>EKMLGI</original>
    <variation>SKGRKL</variation>
    <location>
        <begin position="569"/>
        <end position="574"/>
    </location>
</feature>
<feature type="splice variant" id="VSP_010511" description="In isoform 4." evidence="7">
    <location>
        <begin position="575"/>
        <end position="616"/>
    </location>
</feature>
<feature type="sequence variant" id="VAR_018738" description="In dbSNP:rs10142502.">
    <original>R</original>
    <variation>C</variation>
    <location>
        <position position="10"/>
    </location>
</feature>
<feature type="sequence variant" id="VAR_052599" description="In dbSNP:rs34302825.">
    <original>S</original>
    <variation>N</variation>
    <location>
        <position position="237"/>
    </location>
</feature>
<feature type="sequence variant" id="VAR_052600" description="In dbSNP:rs12895348.">
    <original>A</original>
    <variation>T</variation>
    <location>
        <position position="372"/>
    </location>
</feature>
<feature type="sequence variant" id="VAR_018739" description="In dbSNP:rs2295524.">
    <original>D</original>
    <variation>N</variation>
    <location>
        <position position="502"/>
    </location>
</feature>
<feature type="sequence variant" id="VAR_052601" description="In dbSNP:rs34523602.">
    <original>D</original>
    <variation>N</variation>
    <location>
        <position position="507"/>
    </location>
</feature>
<feature type="sequence variant" id="VAR_052602" description="In dbSNP:rs34748911.">
    <original>G</original>
    <variation>D</variation>
    <location>
        <position position="583"/>
    </location>
</feature>
<feature type="sequence conflict" description="In Ref. 4; CAD97934." evidence="8" ref="4">
    <original>M</original>
    <variation>V</variation>
    <location>
        <position position="32"/>
    </location>
</feature>
<feature type="sequence conflict" description="In Ref. 1; AAQ88880." evidence="8" ref="1">
    <original>Q</original>
    <variation>P</variation>
    <location>
        <position position="147"/>
    </location>
</feature>
<feature type="sequence conflict" description="In Ref. 4; CAD97934." evidence="8" ref="4">
    <original>T</original>
    <variation>M</variation>
    <location>
        <position position="165"/>
    </location>
</feature>
<feature type="sequence conflict" description="In Ref. 2; BAB14932." evidence="8" ref="2">
    <original>E</original>
    <variation>V</variation>
    <location>
        <position position="349"/>
    </location>
</feature>
<feature type="sequence conflict" description="In Ref. 4; CAD97934." evidence="8" ref="4">
    <original>E</original>
    <variation>G</variation>
    <location>
        <position position="368"/>
    </location>
</feature>
<feature type="sequence conflict" description="In Ref. 2; BAB14932." evidence="8" ref="2">
    <original>H</original>
    <variation>R</variation>
    <location>
        <position position="497"/>
    </location>
</feature>
<reference key="1">
    <citation type="journal article" date="2003" name="Genome Res.">
        <title>The secreted protein discovery initiative (SPDI), a large-scale effort to identify novel human secreted and transmembrane proteins: a bioinformatics assessment.</title>
        <authorList>
            <person name="Clark H.F."/>
            <person name="Gurney A.L."/>
            <person name="Abaya E."/>
            <person name="Baker K."/>
            <person name="Baldwin D.T."/>
            <person name="Brush J."/>
            <person name="Chen J."/>
            <person name="Chow B."/>
            <person name="Chui C."/>
            <person name="Crowley C."/>
            <person name="Currell B."/>
            <person name="Deuel B."/>
            <person name="Dowd P."/>
            <person name="Eaton D."/>
            <person name="Foster J.S."/>
            <person name="Grimaldi C."/>
            <person name="Gu Q."/>
            <person name="Hass P.E."/>
            <person name="Heldens S."/>
            <person name="Huang A."/>
            <person name="Kim H.S."/>
            <person name="Klimowski L."/>
            <person name="Jin Y."/>
            <person name="Johnson S."/>
            <person name="Lee J."/>
            <person name="Lewis L."/>
            <person name="Liao D."/>
            <person name="Mark M.R."/>
            <person name="Robbie E."/>
            <person name="Sanchez C."/>
            <person name="Schoenfeld J."/>
            <person name="Seshagiri S."/>
            <person name="Simmons L."/>
            <person name="Singh J."/>
            <person name="Smith V."/>
            <person name="Stinson J."/>
            <person name="Vagts A."/>
            <person name="Vandlen R.L."/>
            <person name="Watanabe C."/>
            <person name="Wieand D."/>
            <person name="Woods K."/>
            <person name="Xie M.-H."/>
            <person name="Yansura D.G."/>
            <person name="Yi S."/>
            <person name="Yu G."/>
            <person name="Yuan J."/>
            <person name="Zhang M."/>
            <person name="Zhang Z."/>
            <person name="Goddard A.D."/>
            <person name="Wood W.I."/>
            <person name="Godowski P.J."/>
            <person name="Gray A.M."/>
        </authorList>
    </citation>
    <scope>NUCLEOTIDE SEQUENCE [LARGE SCALE MRNA] (ISOFORM 1)</scope>
</reference>
<reference key="2">
    <citation type="journal article" date="2004" name="Nat. Genet.">
        <title>Complete sequencing and characterization of 21,243 full-length human cDNAs.</title>
        <authorList>
            <person name="Ota T."/>
            <person name="Suzuki Y."/>
            <person name="Nishikawa T."/>
            <person name="Otsuki T."/>
            <person name="Sugiyama T."/>
            <person name="Irie R."/>
            <person name="Wakamatsu A."/>
            <person name="Hayashi K."/>
            <person name="Sato H."/>
            <person name="Nagai K."/>
            <person name="Kimura K."/>
            <person name="Makita H."/>
            <person name="Sekine M."/>
            <person name="Obayashi M."/>
            <person name="Nishi T."/>
            <person name="Shibahara T."/>
            <person name="Tanaka T."/>
            <person name="Ishii S."/>
            <person name="Yamamoto J."/>
            <person name="Saito K."/>
            <person name="Kawai Y."/>
            <person name="Isono Y."/>
            <person name="Nakamura Y."/>
            <person name="Nagahari K."/>
            <person name="Murakami K."/>
            <person name="Yasuda T."/>
            <person name="Iwayanagi T."/>
            <person name="Wagatsuma M."/>
            <person name="Shiratori A."/>
            <person name="Sudo H."/>
            <person name="Hosoiri T."/>
            <person name="Kaku Y."/>
            <person name="Kodaira H."/>
            <person name="Kondo H."/>
            <person name="Sugawara M."/>
            <person name="Takahashi M."/>
            <person name="Kanda K."/>
            <person name="Yokoi T."/>
            <person name="Furuya T."/>
            <person name="Kikkawa E."/>
            <person name="Omura Y."/>
            <person name="Abe K."/>
            <person name="Kamihara K."/>
            <person name="Katsuta N."/>
            <person name="Sato K."/>
            <person name="Tanikawa M."/>
            <person name="Yamazaki M."/>
            <person name="Ninomiya K."/>
            <person name="Ishibashi T."/>
            <person name="Yamashita H."/>
            <person name="Murakawa K."/>
            <person name="Fujimori K."/>
            <person name="Tanai H."/>
            <person name="Kimata M."/>
            <person name="Watanabe M."/>
            <person name="Hiraoka S."/>
            <person name="Chiba Y."/>
            <person name="Ishida S."/>
            <person name="Ono Y."/>
            <person name="Takiguchi S."/>
            <person name="Watanabe S."/>
            <person name="Yosida M."/>
            <person name="Hotuta T."/>
            <person name="Kusano J."/>
            <person name="Kanehori K."/>
            <person name="Takahashi-Fujii A."/>
            <person name="Hara H."/>
            <person name="Tanase T.-O."/>
            <person name="Nomura Y."/>
            <person name="Togiya S."/>
            <person name="Komai F."/>
            <person name="Hara R."/>
            <person name="Takeuchi K."/>
            <person name="Arita M."/>
            <person name="Imose N."/>
            <person name="Musashino K."/>
            <person name="Yuuki H."/>
            <person name="Oshima A."/>
            <person name="Sasaki N."/>
            <person name="Aotsuka S."/>
            <person name="Yoshikawa Y."/>
            <person name="Matsunawa H."/>
            <person name="Ichihara T."/>
            <person name="Shiohata N."/>
            <person name="Sano S."/>
            <person name="Moriya S."/>
            <person name="Momiyama H."/>
            <person name="Satoh N."/>
            <person name="Takami S."/>
            <person name="Terashima Y."/>
            <person name="Suzuki O."/>
            <person name="Nakagawa S."/>
            <person name="Senoh A."/>
            <person name="Mizoguchi H."/>
            <person name="Goto Y."/>
            <person name="Shimizu F."/>
            <person name="Wakebe H."/>
            <person name="Hishigaki H."/>
            <person name="Watanabe T."/>
            <person name="Sugiyama A."/>
            <person name="Takemoto M."/>
            <person name="Kawakami B."/>
            <person name="Yamazaki M."/>
            <person name="Watanabe K."/>
            <person name="Kumagai A."/>
            <person name="Itakura S."/>
            <person name="Fukuzumi Y."/>
            <person name="Fujimori Y."/>
            <person name="Komiyama M."/>
            <person name="Tashiro H."/>
            <person name="Tanigami A."/>
            <person name="Fujiwara T."/>
            <person name="Ono T."/>
            <person name="Yamada K."/>
            <person name="Fujii Y."/>
            <person name="Ozaki K."/>
            <person name="Hirao M."/>
            <person name="Ohmori Y."/>
            <person name="Kawabata A."/>
            <person name="Hikiji T."/>
            <person name="Kobatake N."/>
            <person name="Inagaki H."/>
            <person name="Ikema Y."/>
            <person name="Okamoto S."/>
            <person name="Okitani R."/>
            <person name="Kawakami T."/>
            <person name="Noguchi S."/>
            <person name="Itoh T."/>
            <person name="Shigeta K."/>
            <person name="Senba T."/>
            <person name="Matsumura K."/>
            <person name="Nakajima Y."/>
            <person name="Mizuno T."/>
            <person name="Morinaga M."/>
            <person name="Sasaki M."/>
            <person name="Togashi T."/>
            <person name="Oyama M."/>
            <person name="Hata H."/>
            <person name="Watanabe M."/>
            <person name="Komatsu T."/>
            <person name="Mizushima-Sugano J."/>
            <person name="Satoh T."/>
            <person name="Shirai Y."/>
            <person name="Takahashi Y."/>
            <person name="Nakagawa K."/>
            <person name="Okumura K."/>
            <person name="Nagase T."/>
            <person name="Nomura N."/>
            <person name="Kikuchi H."/>
            <person name="Masuho Y."/>
            <person name="Yamashita R."/>
            <person name="Nakai K."/>
            <person name="Yada T."/>
            <person name="Nakamura Y."/>
            <person name="Ohara O."/>
            <person name="Isogai T."/>
            <person name="Sugano S."/>
        </authorList>
    </citation>
    <scope>NUCLEOTIDE SEQUENCE [LARGE SCALE MRNA] (ISOFORMS 1; 2 AND 5)</scope>
    <source>
        <tissue>Adipose tissue</tissue>
        <tissue>Brain</tissue>
        <tissue>Spleen</tissue>
        <tissue>Teratocarcinoma</tissue>
    </source>
</reference>
<reference key="3">
    <citation type="submission" date="2003-01" db="EMBL/GenBank/DDBJ databases">
        <title>Full-length cDNA libraries and normalization.</title>
        <authorList>
            <person name="Li W.B."/>
            <person name="Gruber C."/>
            <person name="Jessee J."/>
            <person name="Polayes D."/>
        </authorList>
    </citation>
    <scope>NUCLEOTIDE SEQUENCE [LARGE SCALE MRNA] (ISOFORMS 2; 3 AND 4)</scope>
    <source>
        <tissue>Neuroblastoma</tissue>
    </source>
</reference>
<reference key="4">
    <citation type="journal article" date="2007" name="BMC Genomics">
        <title>The full-ORF clone resource of the German cDNA consortium.</title>
        <authorList>
            <person name="Bechtel S."/>
            <person name="Rosenfelder H."/>
            <person name="Duda A."/>
            <person name="Schmidt C.P."/>
            <person name="Ernst U."/>
            <person name="Wellenreuther R."/>
            <person name="Mehrle A."/>
            <person name="Schuster C."/>
            <person name="Bahr A."/>
            <person name="Bloecker H."/>
            <person name="Heubner D."/>
            <person name="Hoerlein A."/>
            <person name="Michel G."/>
            <person name="Wedler H."/>
            <person name="Koehrer K."/>
            <person name="Ottenwaelder B."/>
            <person name="Poustka A."/>
            <person name="Wiemann S."/>
            <person name="Schupp I."/>
        </authorList>
    </citation>
    <scope>NUCLEOTIDE SEQUENCE [LARGE SCALE MRNA] (ISOFORM 2)</scope>
    <source>
        <tissue>B-cell</tissue>
        <tissue>Endometrium</tissue>
        <tissue>T-cell</tissue>
    </source>
</reference>
<reference key="5">
    <citation type="journal article" date="2004" name="Genome Res.">
        <title>The status, quality, and expansion of the NIH full-length cDNA project: the Mammalian Gene Collection (MGC).</title>
        <authorList>
            <consortium name="The MGC Project Team"/>
        </authorList>
    </citation>
    <scope>NUCLEOTIDE SEQUENCE [LARGE SCALE MRNA] (ISOFORMS 1 AND 6)</scope>
    <source>
        <tissue>Brain</tissue>
        <tissue>Eye</tissue>
        <tissue>Lung</tissue>
    </source>
</reference>
<reference key="6">
    <citation type="journal article" date="2011" name="BMC Syst. Biol.">
        <title>Initial characterization of the human central proteome.</title>
        <authorList>
            <person name="Burkard T.R."/>
            <person name="Planyavsky M."/>
            <person name="Kaupe I."/>
            <person name="Breitwieser F.P."/>
            <person name="Buerckstuemmer T."/>
            <person name="Bennett K.L."/>
            <person name="Superti-Furga G."/>
            <person name="Colinge J."/>
        </authorList>
    </citation>
    <scope>IDENTIFICATION BY MASS SPECTROMETRY [LARGE SCALE ANALYSIS]</scope>
</reference>
<reference key="7">
    <citation type="journal article" date="2014" name="J. Proteomics">
        <title>An enzyme assisted RP-RPLC approach for in-depth analysis of human liver phosphoproteome.</title>
        <authorList>
            <person name="Bian Y."/>
            <person name="Song C."/>
            <person name="Cheng K."/>
            <person name="Dong M."/>
            <person name="Wang F."/>
            <person name="Huang J."/>
            <person name="Sun D."/>
            <person name="Wang L."/>
            <person name="Ye M."/>
            <person name="Zou H."/>
        </authorList>
    </citation>
    <scope>IDENTIFICATION BY MASS SPECTROMETRY [LARGE SCALE ANALYSIS]</scope>
    <source>
        <tissue>Liver</tissue>
    </source>
</reference>
<reference key="8">
    <citation type="journal article" date="2015" name="Proteomics">
        <title>N-terminome analysis of the human mitochondrial proteome.</title>
        <authorList>
            <person name="Vaca Jacome A.S."/>
            <person name="Rabilloud T."/>
            <person name="Schaeffer-Reiss C."/>
            <person name="Rompais M."/>
            <person name="Ayoub D."/>
            <person name="Lane L."/>
            <person name="Bairoch A."/>
            <person name="Van Dorsselaer A."/>
            <person name="Carapito C."/>
        </authorList>
    </citation>
    <scope>IDENTIFICATION BY MASS SPECTROMETRY [LARGE SCALE ANALYSIS]</scope>
</reference>
<evidence type="ECO:0000250" key="1">
    <source>
        <dbReference type="UniProtKB" id="Q8BH86"/>
    </source>
</evidence>
<evidence type="ECO:0000255" key="2"/>
<evidence type="ECO:0000303" key="3">
    <source>
    </source>
</evidence>
<evidence type="ECO:0000303" key="4">
    <source>
    </source>
</evidence>
<evidence type="ECO:0000303" key="5">
    <source>
    </source>
</evidence>
<evidence type="ECO:0000303" key="6">
    <source>
    </source>
</evidence>
<evidence type="ECO:0000303" key="7">
    <source ref="3"/>
</evidence>
<evidence type="ECO:0000305" key="8"/>
<evidence type="ECO:0000312" key="9">
    <source>
        <dbReference type="HGNC" id="HGNC:20498"/>
    </source>
</evidence>